<comment type="function">
    <text evidence="1">Catalyzes the transfer of the diacylglyceryl group from phosphatidylglycerol to the sulfhydryl group of the N-terminal cysteine of a prolipoprotein, the first step in the formation of mature lipoproteins.</text>
</comment>
<comment type="catalytic activity">
    <reaction evidence="1">
        <text>L-cysteinyl-[prolipoprotein] + a 1,2-diacyl-sn-glycero-3-phospho-(1'-sn-glycerol) = an S-1,2-diacyl-sn-glyceryl-L-cysteinyl-[prolipoprotein] + sn-glycerol 1-phosphate + H(+)</text>
        <dbReference type="Rhea" id="RHEA:56712"/>
        <dbReference type="Rhea" id="RHEA-COMP:14679"/>
        <dbReference type="Rhea" id="RHEA-COMP:14680"/>
        <dbReference type="ChEBI" id="CHEBI:15378"/>
        <dbReference type="ChEBI" id="CHEBI:29950"/>
        <dbReference type="ChEBI" id="CHEBI:57685"/>
        <dbReference type="ChEBI" id="CHEBI:64716"/>
        <dbReference type="ChEBI" id="CHEBI:140658"/>
        <dbReference type="EC" id="2.5.1.145"/>
    </reaction>
</comment>
<comment type="pathway">
    <text evidence="1">Protein modification; lipoprotein biosynthesis (diacylglyceryl transfer).</text>
</comment>
<comment type="subcellular location">
    <subcellularLocation>
        <location evidence="1">Cell inner membrane</location>
        <topology evidence="1">Multi-pass membrane protein</topology>
    </subcellularLocation>
</comment>
<comment type="similarity">
    <text evidence="1">Belongs to the Lgt family.</text>
</comment>
<gene>
    <name evidence="1" type="primary">lgt</name>
    <name type="ordered locus">Msil_1135</name>
</gene>
<reference key="1">
    <citation type="journal article" date="2010" name="J. Bacteriol.">
        <title>Complete genome sequence of the aerobic facultative methanotroph Methylocella silvestris BL2.</title>
        <authorList>
            <person name="Chen Y."/>
            <person name="Crombie A."/>
            <person name="Rahman M.T."/>
            <person name="Dedysh S.N."/>
            <person name="Liesack W."/>
            <person name="Stott M.B."/>
            <person name="Alam M."/>
            <person name="Theisen A.R."/>
            <person name="Murrell J.C."/>
            <person name="Dunfield P.F."/>
        </authorList>
    </citation>
    <scope>NUCLEOTIDE SEQUENCE [LARGE SCALE GENOMIC DNA]</scope>
    <source>
        <strain>DSM 15510 / CIP 108128 / LMG 27833 / NCIMB 13906 / BL2</strain>
    </source>
</reference>
<organism>
    <name type="scientific">Methylocella silvestris (strain DSM 15510 / CIP 108128 / LMG 27833 / NCIMB 13906 / BL2)</name>
    <dbReference type="NCBI Taxonomy" id="395965"/>
    <lineage>
        <taxon>Bacteria</taxon>
        <taxon>Pseudomonadati</taxon>
        <taxon>Pseudomonadota</taxon>
        <taxon>Alphaproteobacteria</taxon>
        <taxon>Hyphomicrobiales</taxon>
        <taxon>Beijerinckiaceae</taxon>
        <taxon>Methylocella</taxon>
    </lineage>
</organism>
<keyword id="KW-0997">Cell inner membrane</keyword>
<keyword id="KW-1003">Cell membrane</keyword>
<keyword id="KW-0472">Membrane</keyword>
<keyword id="KW-1185">Reference proteome</keyword>
<keyword id="KW-0808">Transferase</keyword>
<keyword id="KW-0812">Transmembrane</keyword>
<keyword id="KW-1133">Transmembrane helix</keyword>
<accession>B8ENH3</accession>
<evidence type="ECO:0000255" key="1">
    <source>
        <dbReference type="HAMAP-Rule" id="MF_01147"/>
    </source>
</evidence>
<dbReference type="EC" id="2.5.1.145" evidence="1"/>
<dbReference type="EMBL" id="CP001280">
    <property type="protein sequence ID" value="ACK50104.1"/>
    <property type="molecule type" value="Genomic_DNA"/>
</dbReference>
<dbReference type="RefSeq" id="WP_012590174.1">
    <property type="nucleotide sequence ID" value="NC_011666.1"/>
</dbReference>
<dbReference type="SMR" id="B8ENH3"/>
<dbReference type="STRING" id="395965.Msil_1135"/>
<dbReference type="KEGG" id="msl:Msil_1135"/>
<dbReference type="eggNOG" id="COG0682">
    <property type="taxonomic scope" value="Bacteria"/>
</dbReference>
<dbReference type="HOGENOM" id="CLU_013386_1_0_5"/>
<dbReference type="OrthoDB" id="871140at2"/>
<dbReference type="UniPathway" id="UPA00664"/>
<dbReference type="Proteomes" id="UP000002257">
    <property type="component" value="Chromosome"/>
</dbReference>
<dbReference type="GO" id="GO:0005886">
    <property type="term" value="C:plasma membrane"/>
    <property type="evidence" value="ECO:0007669"/>
    <property type="project" value="UniProtKB-SubCell"/>
</dbReference>
<dbReference type="GO" id="GO:0008961">
    <property type="term" value="F:phosphatidylglycerol-prolipoprotein diacylglyceryl transferase activity"/>
    <property type="evidence" value="ECO:0007669"/>
    <property type="project" value="UniProtKB-UniRule"/>
</dbReference>
<dbReference type="GO" id="GO:0042158">
    <property type="term" value="P:lipoprotein biosynthetic process"/>
    <property type="evidence" value="ECO:0007669"/>
    <property type="project" value="UniProtKB-UniRule"/>
</dbReference>
<dbReference type="HAMAP" id="MF_01147">
    <property type="entry name" value="Lgt"/>
    <property type="match status" value="1"/>
</dbReference>
<dbReference type="InterPro" id="IPR001640">
    <property type="entry name" value="Lgt"/>
</dbReference>
<dbReference type="NCBIfam" id="TIGR00544">
    <property type="entry name" value="lgt"/>
    <property type="match status" value="1"/>
</dbReference>
<dbReference type="PANTHER" id="PTHR30589:SF0">
    <property type="entry name" value="PHOSPHATIDYLGLYCEROL--PROLIPOPROTEIN DIACYLGLYCERYL TRANSFERASE"/>
    <property type="match status" value="1"/>
</dbReference>
<dbReference type="PANTHER" id="PTHR30589">
    <property type="entry name" value="PROLIPOPROTEIN DIACYLGLYCERYL TRANSFERASE"/>
    <property type="match status" value="1"/>
</dbReference>
<dbReference type="Pfam" id="PF01790">
    <property type="entry name" value="LGT"/>
    <property type="match status" value="1"/>
</dbReference>
<feature type="chain" id="PRO_1000164142" description="Phosphatidylglycerol--prolipoprotein diacylglyceryl transferase">
    <location>
        <begin position="1"/>
        <end position="272"/>
    </location>
</feature>
<feature type="transmembrane region" description="Helical" evidence="1">
    <location>
        <begin position="24"/>
        <end position="44"/>
    </location>
</feature>
<feature type="transmembrane region" description="Helical" evidence="1">
    <location>
        <begin position="64"/>
        <end position="84"/>
    </location>
</feature>
<feature type="transmembrane region" description="Helical" evidence="1">
    <location>
        <begin position="99"/>
        <end position="119"/>
    </location>
</feature>
<feature type="transmembrane region" description="Helical" evidence="1">
    <location>
        <begin position="125"/>
        <end position="145"/>
    </location>
</feature>
<feature type="transmembrane region" description="Helical" evidence="1">
    <location>
        <begin position="185"/>
        <end position="205"/>
    </location>
</feature>
<feature type="transmembrane region" description="Helical" evidence="1">
    <location>
        <begin position="209"/>
        <end position="229"/>
    </location>
</feature>
<feature type="transmembrane region" description="Helical" evidence="1">
    <location>
        <begin position="245"/>
        <end position="265"/>
    </location>
</feature>
<feature type="binding site" evidence="1">
    <location>
        <position position="147"/>
    </location>
    <ligand>
        <name>a 1,2-diacyl-sn-glycero-3-phospho-(1'-sn-glycerol)</name>
        <dbReference type="ChEBI" id="CHEBI:64716"/>
    </ligand>
</feature>
<sequence>MPFVIAYPVIDPVLLSIGPLPIRWYALAYIAGLVIGWAYARHLVARASFWGGRVRPDLGVIDDLLVYTALGVILGGRLGYVVFYNPAFYLSHPLDVFKLWQGGMSFHGGLVGAGVGVMLLARRRGLPTLALGDIVSAVAPIGLFLGRIANFIKPELWGRPTDVPWAMVFPGAGDLPRHPSQLYEAAAEGALLFLLLFVAVRLGALKRSGLVTGLFAIGYGCARILCEFFREPDPQLGFLFGGATMGMLLSLPLIAAGLALVAFAYRREAVPA</sequence>
<protein>
    <recommendedName>
        <fullName evidence="1">Phosphatidylglycerol--prolipoprotein diacylglyceryl transferase</fullName>
        <ecNumber evidence="1">2.5.1.145</ecNumber>
    </recommendedName>
</protein>
<name>LGT_METSB</name>
<proteinExistence type="inferred from homology"/>